<sequence length="392" mass="41937">MSFLTLKDVDLKDKKVLVRVDFNVPVKDGKVTSKVRIEAAIPTIQYILDQGGAVILMSHLGRPTEGEYDSQFSLEPVAKALSEIINKPVKFAKDWLDGVDVKAGEIVMCENVRFNSGEKKSTDDLSKKIASLGDVFVMDAFATAHRAQASTYGVAKYIPVACAGILLTNEIQALEKALKSPKKPMAAIVGGSKVSTKLSVLNNLLDKVEILIVGGGIANTFIKAEGFDVGNSLYEQDLVAEATEILAKAKALGVNIPVPVDVRVAKEFSENAQAIIKKVSDVVADEMILDIGPESQKIIAELLKSANTILWNGPVGVFEFDNFAEGTKALSLAIAQSHAFSVAGGGDTIAAIEKFGIKDQVSYISTAGGAFLEFLEGKKLPAIEILKEKAIR</sequence>
<protein>
    <recommendedName>
        <fullName evidence="1">Phosphoglycerate kinase</fullName>
        <ecNumber evidence="1">2.7.2.3</ecNumber>
    </recommendedName>
</protein>
<evidence type="ECO:0000255" key="1">
    <source>
        <dbReference type="HAMAP-Rule" id="MF_00145"/>
    </source>
</evidence>
<proteinExistence type="inferred from homology"/>
<reference key="1">
    <citation type="journal article" date="2007" name="PLoS ONE">
        <title>Complete genomic characterization of a pathogenic A.II strain of Francisella tularensis subspecies tularensis.</title>
        <authorList>
            <person name="Beckstrom-Sternberg S.M."/>
            <person name="Auerbach R.K."/>
            <person name="Godbole S."/>
            <person name="Pearson J.V."/>
            <person name="Beckstrom-Sternberg J.S."/>
            <person name="Deng Z."/>
            <person name="Munk C."/>
            <person name="Kubota K."/>
            <person name="Zhou Y."/>
            <person name="Bruce D."/>
            <person name="Noronha J."/>
            <person name="Scheuermann R.H."/>
            <person name="Wang A."/>
            <person name="Wei X."/>
            <person name="Wang J."/>
            <person name="Hao J."/>
            <person name="Wagner D.M."/>
            <person name="Brettin T.S."/>
            <person name="Brown N."/>
            <person name="Gilna P."/>
            <person name="Keim P.S."/>
        </authorList>
    </citation>
    <scope>NUCLEOTIDE SEQUENCE [LARGE SCALE GENOMIC DNA]</scope>
    <source>
        <strain>WY96-3418</strain>
    </source>
</reference>
<gene>
    <name evidence="1" type="primary">pgk</name>
    <name type="ordered locus">FTW_0524</name>
</gene>
<feature type="chain" id="PRO_1000057995" description="Phosphoglycerate kinase">
    <location>
        <begin position="1"/>
        <end position="392"/>
    </location>
</feature>
<feature type="binding site" evidence="1">
    <location>
        <begin position="21"/>
        <end position="23"/>
    </location>
    <ligand>
        <name>substrate</name>
    </ligand>
</feature>
<feature type="binding site" evidence="1">
    <location>
        <position position="36"/>
    </location>
    <ligand>
        <name>substrate</name>
    </ligand>
</feature>
<feature type="binding site" evidence="1">
    <location>
        <begin position="59"/>
        <end position="62"/>
    </location>
    <ligand>
        <name>substrate</name>
    </ligand>
</feature>
<feature type="binding site" evidence="1">
    <location>
        <position position="113"/>
    </location>
    <ligand>
        <name>substrate</name>
    </ligand>
</feature>
<feature type="binding site" evidence="1">
    <location>
        <position position="146"/>
    </location>
    <ligand>
        <name>substrate</name>
    </ligand>
</feature>
<feature type="binding site" evidence="1">
    <location>
        <position position="197"/>
    </location>
    <ligand>
        <name>ATP</name>
        <dbReference type="ChEBI" id="CHEBI:30616"/>
    </ligand>
</feature>
<feature type="binding site" evidence="1">
    <location>
        <position position="319"/>
    </location>
    <ligand>
        <name>ATP</name>
        <dbReference type="ChEBI" id="CHEBI:30616"/>
    </ligand>
</feature>
<feature type="binding site" evidence="1">
    <location>
        <begin position="345"/>
        <end position="348"/>
    </location>
    <ligand>
        <name>ATP</name>
        <dbReference type="ChEBI" id="CHEBI:30616"/>
    </ligand>
</feature>
<organism>
    <name type="scientific">Francisella tularensis subsp. tularensis (strain WY96-3418)</name>
    <dbReference type="NCBI Taxonomy" id="418136"/>
    <lineage>
        <taxon>Bacteria</taxon>
        <taxon>Pseudomonadati</taxon>
        <taxon>Pseudomonadota</taxon>
        <taxon>Gammaproteobacteria</taxon>
        <taxon>Thiotrichales</taxon>
        <taxon>Francisellaceae</taxon>
        <taxon>Francisella</taxon>
    </lineage>
</organism>
<name>PGK_FRATW</name>
<comment type="catalytic activity">
    <reaction evidence="1">
        <text>(2R)-3-phosphoglycerate + ATP = (2R)-3-phospho-glyceroyl phosphate + ADP</text>
        <dbReference type="Rhea" id="RHEA:14801"/>
        <dbReference type="ChEBI" id="CHEBI:30616"/>
        <dbReference type="ChEBI" id="CHEBI:57604"/>
        <dbReference type="ChEBI" id="CHEBI:58272"/>
        <dbReference type="ChEBI" id="CHEBI:456216"/>
        <dbReference type="EC" id="2.7.2.3"/>
    </reaction>
</comment>
<comment type="pathway">
    <text evidence="1">Carbohydrate degradation; glycolysis; pyruvate from D-glyceraldehyde 3-phosphate: step 2/5.</text>
</comment>
<comment type="subunit">
    <text evidence="1">Monomer.</text>
</comment>
<comment type="subcellular location">
    <subcellularLocation>
        <location evidence="1">Cytoplasm</location>
    </subcellularLocation>
</comment>
<comment type="similarity">
    <text evidence="1">Belongs to the phosphoglycerate kinase family.</text>
</comment>
<accession>A4IWY7</accession>
<keyword id="KW-0067">ATP-binding</keyword>
<keyword id="KW-0963">Cytoplasm</keyword>
<keyword id="KW-0324">Glycolysis</keyword>
<keyword id="KW-0418">Kinase</keyword>
<keyword id="KW-0547">Nucleotide-binding</keyword>
<keyword id="KW-0808">Transferase</keyword>
<dbReference type="EC" id="2.7.2.3" evidence="1"/>
<dbReference type="EMBL" id="CP000608">
    <property type="protein sequence ID" value="ABO46439.1"/>
    <property type="molecule type" value="Genomic_DNA"/>
</dbReference>
<dbReference type="RefSeq" id="WP_003022166.1">
    <property type="nucleotide sequence ID" value="NC_009257.1"/>
</dbReference>
<dbReference type="SMR" id="A4IWY7"/>
<dbReference type="KEGG" id="ftw:FTW_0524"/>
<dbReference type="HOGENOM" id="CLU_025427_0_2_6"/>
<dbReference type="UniPathway" id="UPA00109">
    <property type="reaction ID" value="UER00185"/>
</dbReference>
<dbReference type="GO" id="GO:0005829">
    <property type="term" value="C:cytosol"/>
    <property type="evidence" value="ECO:0007669"/>
    <property type="project" value="TreeGrafter"/>
</dbReference>
<dbReference type="GO" id="GO:0043531">
    <property type="term" value="F:ADP binding"/>
    <property type="evidence" value="ECO:0007669"/>
    <property type="project" value="TreeGrafter"/>
</dbReference>
<dbReference type="GO" id="GO:0005524">
    <property type="term" value="F:ATP binding"/>
    <property type="evidence" value="ECO:0007669"/>
    <property type="project" value="UniProtKB-KW"/>
</dbReference>
<dbReference type="GO" id="GO:0004618">
    <property type="term" value="F:phosphoglycerate kinase activity"/>
    <property type="evidence" value="ECO:0007669"/>
    <property type="project" value="UniProtKB-UniRule"/>
</dbReference>
<dbReference type="GO" id="GO:0006094">
    <property type="term" value="P:gluconeogenesis"/>
    <property type="evidence" value="ECO:0007669"/>
    <property type="project" value="TreeGrafter"/>
</dbReference>
<dbReference type="GO" id="GO:0006096">
    <property type="term" value="P:glycolytic process"/>
    <property type="evidence" value="ECO:0007669"/>
    <property type="project" value="UniProtKB-UniRule"/>
</dbReference>
<dbReference type="FunFam" id="3.40.50.1260:FF:000001">
    <property type="entry name" value="Phosphoglycerate kinase"/>
    <property type="match status" value="1"/>
</dbReference>
<dbReference type="FunFam" id="3.40.50.1260:FF:000005">
    <property type="entry name" value="Phosphoglycerate kinase"/>
    <property type="match status" value="1"/>
</dbReference>
<dbReference type="Gene3D" id="3.40.50.1260">
    <property type="entry name" value="Phosphoglycerate kinase, N-terminal domain"/>
    <property type="match status" value="2"/>
</dbReference>
<dbReference type="HAMAP" id="MF_00145">
    <property type="entry name" value="Phosphoglyc_kinase"/>
    <property type="match status" value="1"/>
</dbReference>
<dbReference type="InterPro" id="IPR001576">
    <property type="entry name" value="Phosphoglycerate_kinase"/>
</dbReference>
<dbReference type="InterPro" id="IPR015911">
    <property type="entry name" value="Phosphoglycerate_kinase_CS"/>
</dbReference>
<dbReference type="InterPro" id="IPR015824">
    <property type="entry name" value="Phosphoglycerate_kinase_N"/>
</dbReference>
<dbReference type="InterPro" id="IPR036043">
    <property type="entry name" value="Phosphoglycerate_kinase_sf"/>
</dbReference>
<dbReference type="PANTHER" id="PTHR11406">
    <property type="entry name" value="PHOSPHOGLYCERATE KINASE"/>
    <property type="match status" value="1"/>
</dbReference>
<dbReference type="PANTHER" id="PTHR11406:SF23">
    <property type="entry name" value="PHOSPHOGLYCERATE KINASE 1, CHLOROPLASTIC-RELATED"/>
    <property type="match status" value="1"/>
</dbReference>
<dbReference type="Pfam" id="PF00162">
    <property type="entry name" value="PGK"/>
    <property type="match status" value="1"/>
</dbReference>
<dbReference type="PIRSF" id="PIRSF000724">
    <property type="entry name" value="Pgk"/>
    <property type="match status" value="1"/>
</dbReference>
<dbReference type="PRINTS" id="PR00477">
    <property type="entry name" value="PHGLYCKINASE"/>
</dbReference>
<dbReference type="SUPFAM" id="SSF53748">
    <property type="entry name" value="Phosphoglycerate kinase"/>
    <property type="match status" value="1"/>
</dbReference>
<dbReference type="PROSITE" id="PS00111">
    <property type="entry name" value="PGLYCERATE_KINASE"/>
    <property type="match status" value="1"/>
</dbReference>